<dbReference type="EMBL" id="CP000680">
    <property type="protein sequence ID" value="ABP86638.1"/>
    <property type="molecule type" value="Genomic_DNA"/>
</dbReference>
<dbReference type="SMR" id="A4XZ72"/>
<dbReference type="STRING" id="399739.Pmen_3891"/>
<dbReference type="KEGG" id="pmy:Pmen_3891"/>
<dbReference type="eggNOG" id="COG1841">
    <property type="taxonomic scope" value="Bacteria"/>
</dbReference>
<dbReference type="HOGENOM" id="CLU_131047_1_4_6"/>
<dbReference type="OrthoDB" id="9812790at2"/>
<dbReference type="GO" id="GO:0022625">
    <property type="term" value="C:cytosolic large ribosomal subunit"/>
    <property type="evidence" value="ECO:0007669"/>
    <property type="project" value="TreeGrafter"/>
</dbReference>
<dbReference type="GO" id="GO:0003735">
    <property type="term" value="F:structural constituent of ribosome"/>
    <property type="evidence" value="ECO:0007669"/>
    <property type="project" value="InterPro"/>
</dbReference>
<dbReference type="GO" id="GO:0006412">
    <property type="term" value="P:translation"/>
    <property type="evidence" value="ECO:0007669"/>
    <property type="project" value="UniProtKB-UniRule"/>
</dbReference>
<dbReference type="CDD" id="cd01658">
    <property type="entry name" value="Ribosomal_L30"/>
    <property type="match status" value="1"/>
</dbReference>
<dbReference type="FunFam" id="3.30.1390.20:FF:000001">
    <property type="entry name" value="50S ribosomal protein L30"/>
    <property type="match status" value="1"/>
</dbReference>
<dbReference type="Gene3D" id="3.30.1390.20">
    <property type="entry name" value="Ribosomal protein L30, ferredoxin-like fold domain"/>
    <property type="match status" value="1"/>
</dbReference>
<dbReference type="HAMAP" id="MF_01371_B">
    <property type="entry name" value="Ribosomal_uL30_B"/>
    <property type="match status" value="1"/>
</dbReference>
<dbReference type="InterPro" id="IPR036919">
    <property type="entry name" value="Ribo_uL30_ferredoxin-like_sf"/>
</dbReference>
<dbReference type="InterPro" id="IPR005996">
    <property type="entry name" value="Ribosomal_uL30_bac-type"/>
</dbReference>
<dbReference type="InterPro" id="IPR016082">
    <property type="entry name" value="Ribosomal_uL30_ferredoxin-like"/>
</dbReference>
<dbReference type="NCBIfam" id="TIGR01308">
    <property type="entry name" value="rpmD_bact"/>
    <property type="match status" value="1"/>
</dbReference>
<dbReference type="PANTHER" id="PTHR15892:SF2">
    <property type="entry name" value="LARGE RIBOSOMAL SUBUNIT PROTEIN UL30M"/>
    <property type="match status" value="1"/>
</dbReference>
<dbReference type="PANTHER" id="PTHR15892">
    <property type="entry name" value="MITOCHONDRIAL RIBOSOMAL PROTEIN L30"/>
    <property type="match status" value="1"/>
</dbReference>
<dbReference type="Pfam" id="PF00327">
    <property type="entry name" value="Ribosomal_L30"/>
    <property type="match status" value="1"/>
</dbReference>
<dbReference type="PIRSF" id="PIRSF002211">
    <property type="entry name" value="Ribosomal_L30_bac-type"/>
    <property type="match status" value="1"/>
</dbReference>
<dbReference type="SUPFAM" id="SSF55129">
    <property type="entry name" value="Ribosomal protein L30p/L7e"/>
    <property type="match status" value="1"/>
</dbReference>
<protein>
    <recommendedName>
        <fullName evidence="1">Large ribosomal subunit protein uL30</fullName>
    </recommendedName>
    <alternativeName>
        <fullName evidence="2">50S ribosomal protein L30</fullName>
    </alternativeName>
</protein>
<gene>
    <name evidence="1" type="primary">rpmD</name>
    <name type="ordered locus">Pmen_3891</name>
</gene>
<proteinExistence type="inferred from homology"/>
<keyword id="KW-0687">Ribonucleoprotein</keyword>
<keyword id="KW-0689">Ribosomal protein</keyword>
<reference key="1">
    <citation type="submission" date="2007-04" db="EMBL/GenBank/DDBJ databases">
        <title>Complete sequence of Pseudomonas mendocina ymp.</title>
        <authorList>
            <consortium name="US DOE Joint Genome Institute"/>
            <person name="Copeland A."/>
            <person name="Lucas S."/>
            <person name="Lapidus A."/>
            <person name="Barry K."/>
            <person name="Glavina del Rio T."/>
            <person name="Dalin E."/>
            <person name="Tice H."/>
            <person name="Pitluck S."/>
            <person name="Kiss H."/>
            <person name="Brettin T."/>
            <person name="Detter J.C."/>
            <person name="Bruce D."/>
            <person name="Han C."/>
            <person name="Schmutz J."/>
            <person name="Larimer F."/>
            <person name="Land M."/>
            <person name="Hauser L."/>
            <person name="Kyrpides N."/>
            <person name="Mikhailova N."/>
            <person name="Hersman L."/>
            <person name="Dubois J."/>
            <person name="Maurice P."/>
            <person name="Richardson P."/>
        </authorList>
    </citation>
    <scope>NUCLEOTIDE SEQUENCE [LARGE SCALE GENOMIC DNA]</scope>
    <source>
        <strain>ymp</strain>
    </source>
</reference>
<sequence>MANTVKVTLIKSTNGRLANHKACVKGLGLRRIGHTVEVLDTPENRGMINKAYYLLKVEG</sequence>
<evidence type="ECO:0000255" key="1">
    <source>
        <dbReference type="HAMAP-Rule" id="MF_01371"/>
    </source>
</evidence>
<evidence type="ECO:0000305" key="2"/>
<feature type="chain" id="PRO_0000347130" description="Large ribosomal subunit protein uL30">
    <location>
        <begin position="1"/>
        <end position="59"/>
    </location>
</feature>
<organism>
    <name type="scientific">Ectopseudomonas mendocina (strain ymp)</name>
    <name type="common">Pseudomonas mendocina</name>
    <dbReference type="NCBI Taxonomy" id="399739"/>
    <lineage>
        <taxon>Bacteria</taxon>
        <taxon>Pseudomonadati</taxon>
        <taxon>Pseudomonadota</taxon>
        <taxon>Gammaproteobacteria</taxon>
        <taxon>Pseudomonadales</taxon>
        <taxon>Pseudomonadaceae</taxon>
        <taxon>Ectopseudomonas</taxon>
    </lineage>
</organism>
<comment type="subunit">
    <text evidence="1">Part of the 50S ribosomal subunit.</text>
</comment>
<comment type="similarity">
    <text evidence="1">Belongs to the universal ribosomal protein uL30 family.</text>
</comment>
<accession>A4XZ72</accession>
<name>RL30_ECTM1</name>